<name>DADA_PARPJ</name>
<protein>
    <recommendedName>
        <fullName evidence="1">D-amino acid dehydrogenase</fullName>
        <ecNumber evidence="1">1.4.99.-</ecNumber>
    </recommendedName>
</protein>
<feature type="chain" id="PRO_1000138646" description="D-amino acid dehydrogenase">
    <location>
        <begin position="1"/>
        <end position="428"/>
    </location>
</feature>
<feature type="binding site" evidence="1">
    <location>
        <begin position="3"/>
        <end position="17"/>
    </location>
    <ligand>
        <name>FAD</name>
        <dbReference type="ChEBI" id="CHEBI:57692"/>
    </ligand>
</feature>
<evidence type="ECO:0000255" key="1">
    <source>
        <dbReference type="HAMAP-Rule" id="MF_01202"/>
    </source>
</evidence>
<comment type="function">
    <text evidence="1">Oxidative deamination of D-amino acids.</text>
</comment>
<comment type="catalytic activity">
    <reaction evidence="1">
        <text>a D-alpha-amino acid + A + H2O = a 2-oxocarboxylate + AH2 + NH4(+)</text>
        <dbReference type="Rhea" id="RHEA:18125"/>
        <dbReference type="ChEBI" id="CHEBI:13193"/>
        <dbReference type="ChEBI" id="CHEBI:15377"/>
        <dbReference type="ChEBI" id="CHEBI:17499"/>
        <dbReference type="ChEBI" id="CHEBI:28938"/>
        <dbReference type="ChEBI" id="CHEBI:35179"/>
        <dbReference type="ChEBI" id="CHEBI:59871"/>
    </reaction>
</comment>
<comment type="cofactor">
    <cofactor evidence="1">
        <name>FAD</name>
        <dbReference type="ChEBI" id="CHEBI:57692"/>
    </cofactor>
</comment>
<comment type="pathway">
    <text>Amino-acid degradation; D-alanine degradation; NH(3) and pyruvate from D-alanine: step 1/1.</text>
</comment>
<comment type="similarity">
    <text evidence="1">Belongs to the DadA oxidoreductase family.</text>
</comment>
<reference key="1">
    <citation type="journal article" date="2011" name="J. Bacteriol.">
        <title>Complete genome sequence of the plant growth-promoting endophyte Burkholderia phytofirmans strain PsJN.</title>
        <authorList>
            <person name="Weilharter A."/>
            <person name="Mitter B."/>
            <person name="Shin M.V."/>
            <person name="Chain P.S."/>
            <person name="Nowak J."/>
            <person name="Sessitsch A."/>
        </authorList>
    </citation>
    <scope>NUCLEOTIDE SEQUENCE [LARGE SCALE GENOMIC DNA]</scope>
    <source>
        <strain>DSM 17436 / LMG 22146 / PsJN</strain>
    </source>
</reference>
<keyword id="KW-0274">FAD</keyword>
<keyword id="KW-0285">Flavoprotein</keyword>
<keyword id="KW-0560">Oxidoreductase</keyword>
<sequence length="428" mass="46075">MRVVVLGSGVVGVTSAYYLARAGHEVTVIDREAGPALETSFANAGQISPGYASPWAAPGVPLKAVKWMFQKHAPLAIRLDGTQFQLQWMWQMLQNCTSSRYAVNKGRMVRLAEYSRDCLQALRAETGIQYEGRTGGTLQVFRTQQQFDGAAKDIAVLQEANVPYELLSPAELARAEPALAAVSHKLTGGLRLPGDETGDCQMFTTRLAALAEELGVKFRYNTPIDALAMAGDRIAGVKCGEELVRADSFVVALGSYSTQFLSGLVKIPVYPLKGYSITAPIVNEASAPVSTVLDETYKIAITRFDDRIRVGGMAEIVGFDKSLRQARRETLELCVNDLFPGGGDTSKATFWTGLRPMTPDGTPIVGRTPVPNLFLNTGHGTLGWTMSCGSGQLLADVMSGKQPAIKADDLSVHRYLGEVGGAHRPAYA</sequence>
<dbReference type="EC" id="1.4.99.-" evidence="1"/>
<dbReference type="EMBL" id="CP001052">
    <property type="protein sequence ID" value="ACD17376.1"/>
    <property type="molecule type" value="Genomic_DNA"/>
</dbReference>
<dbReference type="RefSeq" id="WP_012433955.1">
    <property type="nucleotide sequence ID" value="NC_010681.1"/>
</dbReference>
<dbReference type="SMR" id="B2T612"/>
<dbReference type="STRING" id="398527.Bphyt_2982"/>
<dbReference type="KEGG" id="bpy:Bphyt_2982"/>
<dbReference type="eggNOG" id="COG0665">
    <property type="taxonomic scope" value="Bacteria"/>
</dbReference>
<dbReference type="HOGENOM" id="CLU_007884_9_2_4"/>
<dbReference type="OrthoDB" id="18526at2"/>
<dbReference type="UniPathway" id="UPA00043">
    <property type="reaction ID" value="UER00498"/>
</dbReference>
<dbReference type="Proteomes" id="UP000001739">
    <property type="component" value="Chromosome 1"/>
</dbReference>
<dbReference type="GO" id="GO:0005737">
    <property type="term" value="C:cytoplasm"/>
    <property type="evidence" value="ECO:0007669"/>
    <property type="project" value="TreeGrafter"/>
</dbReference>
<dbReference type="GO" id="GO:0005886">
    <property type="term" value="C:plasma membrane"/>
    <property type="evidence" value="ECO:0007669"/>
    <property type="project" value="TreeGrafter"/>
</dbReference>
<dbReference type="GO" id="GO:0008718">
    <property type="term" value="F:D-amino-acid dehydrogenase activity"/>
    <property type="evidence" value="ECO:0007669"/>
    <property type="project" value="UniProtKB-UniRule"/>
</dbReference>
<dbReference type="GO" id="GO:0055130">
    <property type="term" value="P:D-alanine catabolic process"/>
    <property type="evidence" value="ECO:0007669"/>
    <property type="project" value="UniProtKB-UniPathway"/>
</dbReference>
<dbReference type="FunFam" id="3.50.50.60:FF:000020">
    <property type="entry name" value="D-amino acid dehydrogenase"/>
    <property type="match status" value="1"/>
</dbReference>
<dbReference type="Gene3D" id="3.30.9.10">
    <property type="entry name" value="D-Amino Acid Oxidase, subunit A, domain 2"/>
    <property type="match status" value="1"/>
</dbReference>
<dbReference type="Gene3D" id="3.50.50.60">
    <property type="entry name" value="FAD/NAD(P)-binding domain"/>
    <property type="match status" value="2"/>
</dbReference>
<dbReference type="HAMAP" id="MF_01202">
    <property type="entry name" value="DadA"/>
    <property type="match status" value="1"/>
</dbReference>
<dbReference type="InterPro" id="IPR023080">
    <property type="entry name" value="DadA"/>
</dbReference>
<dbReference type="InterPro" id="IPR006076">
    <property type="entry name" value="FAD-dep_OxRdtase"/>
</dbReference>
<dbReference type="InterPro" id="IPR036188">
    <property type="entry name" value="FAD/NAD-bd_sf"/>
</dbReference>
<dbReference type="NCBIfam" id="NF001933">
    <property type="entry name" value="PRK00711.1"/>
    <property type="match status" value="1"/>
</dbReference>
<dbReference type="PANTHER" id="PTHR13847:SF280">
    <property type="entry name" value="D-AMINO ACID DEHYDROGENASE"/>
    <property type="match status" value="1"/>
</dbReference>
<dbReference type="PANTHER" id="PTHR13847">
    <property type="entry name" value="SARCOSINE DEHYDROGENASE-RELATED"/>
    <property type="match status" value="1"/>
</dbReference>
<dbReference type="Pfam" id="PF01266">
    <property type="entry name" value="DAO"/>
    <property type="match status" value="1"/>
</dbReference>
<dbReference type="SUPFAM" id="SSF54373">
    <property type="entry name" value="FAD-linked reductases, C-terminal domain"/>
    <property type="match status" value="1"/>
</dbReference>
<dbReference type="SUPFAM" id="SSF51905">
    <property type="entry name" value="FAD/NAD(P)-binding domain"/>
    <property type="match status" value="1"/>
</dbReference>
<proteinExistence type="inferred from homology"/>
<accession>B2T612</accession>
<gene>
    <name evidence="1" type="primary">dadA</name>
    <name type="ordered locus">Bphyt_2982</name>
</gene>
<organism>
    <name type="scientific">Paraburkholderia phytofirmans (strain DSM 17436 / LMG 22146 / PsJN)</name>
    <name type="common">Burkholderia phytofirmans</name>
    <dbReference type="NCBI Taxonomy" id="398527"/>
    <lineage>
        <taxon>Bacteria</taxon>
        <taxon>Pseudomonadati</taxon>
        <taxon>Pseudomonadota</taxon>
        <taxon>Betaproteobacteria</taxon>
        <taxon>Burkholderiales</taxon>
        <taxon>Burkholderiaceae</taxon>
        <taxon>Paraburkholderia</taxon>
    </lineage>
</organism>